<gene>
    <name evidence="1" type="primary">tyrS</name>
    <name type="ordered locus">ESA_01996</name>
</gene>
<organism>
    <name type="scientific">Cronobacter sakazakii (strain ATCC BAA-894)</name>
    <name type="common">Enterobacter sakazakii</name>
    <dbReference type="NCBI Taxonomy" id="290339"/>
    <lineage>
        <taxon>Bacteria</taxon>
        <taxon>Pseudomonadati</taxon>
        <taxon>Pseudomonadota</taxon>
        <taxon>Gammaproteobacteria</taxon>
        <taxon>Enterobacterales</taxon>
        <taxon>Enterobacteriaceae</taxon>
        <taxon>Cronobacter</taxon>
    </lineage>
</organism>
<comment type="function">
    <text evidence="1">Catalyzes the attachment of tyrosine to tRNA(Tyr) in a two-step reaction: tyrosine is first activated by ATP to form Tyr-AMP and then transferred to the acceptor end of tRNA(Tyr).</text>
</comment>
<comment type="catalytic activity">
    <reaction evidence="1">
        <text>tRNA(Tyr) + L-tyrosine + ATP = L-tyrosyl-tRNA(Tyr) + AMP + diphosphate + H(+)</text>
        <dbReference type="Rhea" id="RHEA:10220"/>
        <dbReference type="Rhea" id="RHEA-COMP:9706"/>
        <dbReference type="Rhea" id="RHEA-COMP:9707"/>
        <dbReference type="ChEBI" id="CHEBI:15378"/>
        <dbReference type="ChEBI" id="CHEBI:30616"/>
        <dbReference type="ChEBI" id="CHEBI:33019"/>
        <dbReference type="ChEBI" id="CHEBI:58315"/>
        <dbReference type="ChEBI" id="CHEBI:78442"/>
        <dbReference type="ChEBI" id="CHEBI:78536"/>
        <dbReference type="ChEBI" id="CHEBI:456215"/>
        <dbReference type="EC" id="6.1.1.1"/>
    </reaction>
</comment>
<comment type="subunit">
    <text evidence="1">Homodimer.</text>
</comment>
<comment type="subcellular location">
    <subcellularLocation>
        <location evidence="1">Cytoplasm</location>
    </subcellularLocation>
</comment>
<comment type="similarity">
    <text evidence="1">Belongs to the class-I aminoacyl-tRNA synthetase family. TyrS type 1 subfamily.</text>
</comment>
<protein>
    <recommendedName>
        <fullName evidence="1">Tyrosine--tRNA ligase</fullName>
        <ecNumber evidence="1">6.1.1.1</ecNumber>
    </recommendedName>
    <alternativeName>
        <fullName evidence="1">Tyrosyl-tRNA synthetase</fullName>
        <shortName evidence="1">TyrRS</shortName>
    </alternativeName>
</protein>
<proteinExistence type="inferred from homology"/>
<keyword id="KW-0030">Aminoacyl-tRNA synthetase</keyword>
<keyword id="KW-0067">ATP-binding</keyword>
<keyword id="KW-0963">Cytoplasm</keyword>
<keyword id="KW-0436">Ligase</keyword>
<keyword id="KW-0547">Nucleotide-binding</keyword>
<keyword id="KW-0648">Protein biosynthesis</keyword>
<keyword id="KW-1185">Reference proteome</keyword>
<keyword id="KW-0694">RNA-binding</keyword>
<sequence length="428" mass="47818">MEKSMASSNLIKQLQERGLVAQVTDEEALAQRLAQGPIALYCGFDPTADSLHLGHLVPLLCLKRFQMAGHKPVALVGGATGLIGDPSFKATERKLNTEDTVQEWVDKIRRQVAPFLDFDCGENSAIAANNYDWFGNMNVLTFLRDIGKHFSVNQMINKEAVKQRLNRDDVGISFTEFSYNLLQGYDFACLNKLHGVALQIGGSDQWGNITSGIDLTRRLHQNQVFGLTVPLITKSDGTKFGKTEGGAVWLDPKKTSPYKFYQFWINTADADVYRFLKFFTFMSIDEINALEEEDKNSGKAPRAQYVLAEQVTRLVHGEEGLAAAKRITESLFNGNLNALSEADFEQLAQNGVPMIEMEKGADLMQALVDSELQPSRGQARKTIASNAITINGEKQSDPEYTFSDSDRLFGRYTLLRRGKKNYCLVCWK</sequence>
<accession>A7MMK1</accession>
<reference key="1">
    <citation type="journal article" date="2010" name="PLoS ONE">
        <title>Genome sequence of Cronobacter sakazakii BAA-894 and comparative genomic hybridization analysis with other Cronobacter species.</title>
        <authorList>
            <person name="Kucerova E."/>
            <person name="Clifton S.W."/>
            <person name="Xia X.Q."/>
            <person name="Long F."/>
            <person name="Porwollik S."/>
            <person name="Fulton L."/>
            <person name="Fronick C."/>
            <person name="Minx P."/>
            <person name="Kyung K."/>
            <person name="Warren W."/>
            <person name="Fulton R."/>
            <person name="Feng D."/>
            <person name="Wollam A."/>
            <person name="Shah N."/>
            <person name="Bhonagiri V."/>
            <person name="Nash W.E."/>
            <person name="Hallsworth-Pepin K."/>
            <person name="Wilson R.K."/>
            <person name="McClelland M."/>
            <person name="Forsythe S.J."/>
        </authorList>
    </citation>
    <scope>NUCLEOTIDE SEQUENCE [LARGE SCALE GENOMIC DNA]</scope>
    <source>
        <strain>ATCC BAA-894</strain>
    </source>
</reference>
<name>SYY_CROS8</name>
<evidence type="ECO:0000255" key="1">
    <source>
        <dbReference type="HAMAP-Rule" id="MF_02006"/>
    </source>
</evidence>
<feature type="chain" id="PRO_1000088592" description="Tyrosine--tRNA ligase">
    <location>
        <begin position="1"/>
        <end position="428"/>
    </location>
</feature>
<feature type="domain" description="S4 RNA-binding" evidence="1">
    <location>
        <begin position="361"/>
        <end position="418"/>
    </location>
</feature>
<feature type="short sequence motif" description="'HIGH' region">
    <location>
        <begin position="46"/>
        <end position="55"/>
    </location>
</feature>
<feature type="short sequence motif" description="'KMSKS' region">
    <location>
        <begin position="239"/>
        <end position="243"/>
    </location>
</feature>
<feature type="binding site" evidence="1">
    <location>
        <position position="41"/>
    </location>
    <ligand>
        <name>L-tyrosine</name>
        <dbReference type="ChEBI" id="CHEBI:58315"/>
    </ligand>
</feature>
<feature type="binding site" evidence="1">
    <location>
        <position position="179"/>
    </location>
    <ligand>
        <name>L-tyrosine</name>
        <dbReference type="ChEBI" id="CHEBI:58315"/>
    </ligand>
</feature>
<feature type="binding site" evidence="1">
    <location>
        <position position="183"/>
    </location>
    <ligand>
        <name>L-tyrosine</name>
        <dbReference type="ChEBI" id="CHEBI:58315"/>
    </ligand>
</feature>
<feature type="binding site" evidence="1">
    <location>
        <position position="242"/>
    </location>
    <ligand>
        <name>ATP</name>
        <dbReference type="ChEBI" id="CHEBI:30616"/>
    </ligand>
</feature>
<dbReference type="EC" id="6.1.1.1" evidence="1"/>
<dbReference type="EMBL" id="CP000783">
    <property type="protein sequence ID" value="ABU77249.1"/>
    <property type="molecule type" value="Genomic_DNA"/>
</dbReference>
<dbReference type="SMR" id="A7MMK1"/>
<dbReference type="KEGG" id="esa:ESA_01996"/>
<dbReference type="HOGENOM" id="CLU_024003_0_3_6"/>
<dbReference type="Proteomes" id="UP000000260">
    <property type="component" value="Chromosome"/>
</dbReference>
<dbReference type="GO" id="GO:0005829">
    <property type="term" value="C:cytosol"/>
    <property type="evidence" value="ECO:0007669"/>
    <property type="project" value="TreeGrafter"/>
</dbReference>
<dbReference type="GO" id="GO:0005524">
    <property type="term" value="F:ATP binding"/>
    <property type="evidence" value="ECO:0007669"/>
    <property type="project" value="UniProtKB-UniRule"/>
</dbReference>
<dbReference type="GO" id="GO:0003723">
    <property type="term" value="F:RNA binding"/>
    <property type="evidence" value="ECO:0007669"/>
    <property type="project" value="UniProtKB-KW"/>
</dbReference>
<dbReference type="GO" id="GO:0004831">
    <property type="term" value="F:tyrosine-tRNA ligase activity"/>
    <property type="evidence" value="ECO:0007669"/>
    <property type="project" value="UniProtKB-UniRule"/>
</dbReference>
<dbReference type="GO" id="GO:0006437">
    <property type="term" value="P:tyrosyl-tRNA aminoacylation"/>
    <property type="evidence" value="ECO:0007669"/>
    <property type="project" value="UniProtKB-UniRule"/>
</dbReference>
<dbReference type="CDD" id="cd00165">
    <property type="entry name" value="S4"/>
    <property type="match status" value="1"/>
</dbReference>
<dbReference type="CDD" id="cd00805">
    <property type="entry name" value="TyrRS_core"/>
    <property type="match status" value="1"/>
</dbReference>
<dbReference type="FunFam" id="1.10.240.10:FF:000001">
    <property type="entry name" value="Tyrosine--tRNA ligase"/>
    <property type="match status" value="1"/>
</dbReference>
<dbReference type="FunFam" id="3.10.290.10:FF:000007">
    <property type="entry name" value="Tyrosine--tRNA ligase"/>
    <property type="match status" value="1"/>
</dbReference>
<dbReference type="FunFam" id="3.40.50.620:FF:000008">
    <property type="entry name" value="Tyrosine--tRNA ligase"/>
    <property type="match status" value="1"/>
</dbReference>
<dbReference type="Gene3D" id="3.40.50.620">
    <property type="entry name" value="HUPs"/>
    <property type="match status" value="1"/>
</dbReference>
<dbReference type="Gene3D" id="3.10.290.10">
    <property type="entry name" value="RNA-binding S4 domain"/>
    <property type="match status" value="1"/>
</dbReference>
<dbReference type="Gene3D" id="1.10.240.10">
    <property type="entry name" value="Tyrosyl-Transfer RNA Synthetase"/>
    <property type="match status" value="1"/>
</dbReference>
<dbReference type="HAMAP" id="MF_02006">
    <property type="entry name" value="Tyr_tRNA_synth_type1"/>
    <property type="match status" value="1"/>
</dbReference>
<dbReference type="InterPro" id="IPR001412">
    <property type="entry name" value="aa-tRNA-synth_I_CS"/>
</dbReference>
<dbReference type="InterPro" id="IPR002305">
    <property type="entry name" value="aa-tRNA-synth_Ic"/>
</dbReference>
<dbReference type="InterPro" id="IPR014729">
    <property type="entry name" value="Rossmann-like_a/b/a_fold"/>
</dbReference>
<dbReference type="InterPro" id="IPR002942">
    <property type="entry name" value="S4_RNA-bd"/>
</dbReference>
<dbReference type="InterPro" id="IPR036986">
    <property type="entry name" value="S4_RNA-bd_sf"/>
</dbReference>
<dbReference type="InterPro" id="IPR054608">
    <property type="entry name" value="SYY-like_C"/>
</dbReference>
<dbReference type="InterPro" id="IPR002307">
    <property type="entry name" value="Tyr-tRNA-ligase"/>
</dbReference>
<dbReference type="InterPro" id="IPR024088">
    <property type="entry name" value="Tyr-tRNA-ligase_bac-type"/>
</dbReference>
<dbReference type="InterPro" id="IPR024107">
    <property type="entry name" value="Tyr-tRNA-ligase_bac_1"/>
</dbReference>
<dbReference type="NCBIfam" id="TIGR00234">
    <property type="entry name" value="tyrS"/>
    <property type="match status" value="1"/>
</dbReference>
<dbReference type="PANTHER" id="PTHR11766:SF0">
    <property type="entry name" value="TYROSINE--TRNA LIGASE, MITOCHONDRIAL"/>
    <property type="match status" value="1"/>
</dbReference>
<dbReference type="PANTHER" id="PTHR11766">
    <property type="entry name" value="TYROSYL-TRNA SYNTHETASE"/>
    <property type="match status" value="1"/>
</dbReference>
<dbReference type="Pfam" id="PF22421">
    <property type="entry name" value="SYY_C-terminal"/>
    <property type="match status" value="1"/>
</dbReference>
<dbReference type="Pfam" id="PF00579">
    <property type="entry name" value="tRNA-synt_1b"/>
    <property type="match status" value="1"/>
</dbReference>
<dbReference type="PRINTS" id="PR01040">
    <property type="entry name" value="TRNASYNTHTYR"/>
</dbReference>
<dbReference type="SMART" id="SM00363">
    <property type="entry name" value="S4"/>
    <property type="match status" value="1"/>
</dbReference>
<dbReference type="SUPFAM" id="SSF55174">
    <property type="entry name" value="Alpha-L RNA-binding motif"/>
    <property type="match status" value="1"/>
</dbReference>
<dbReference type="SUPFAM" id="SSF52374">
    <property type="entry name" value="Nucleotidylyl transferase"/>
    <property type="match status" value="1"/>
</dbReference>
<dbReference type="PROSITE" id="PS00178">
    <property type="entry name" value="AA_TRNA_LIGASE_I"/>
    <property type="match status" value="1"/>
</dbReference>
<dbReference type="PROSITE" id="PS50889">
    <property type="entry name" value="S4"/>
    <property type="match status" value="1"/>
</dbReference>